<protein>
    <recommendedName>
        <fullName>ADP-ribose pyrophosphatase</fullName>
        <ecNumber>3.6.1.13</ecNumber>
    </recommendedName>
    <alternativeName>
        <fullName>ADP-ribose diphosphatase</fullName>
    </alternativeName>
    <alternativeName>
        <fullName>ADP-ribose phosphohydrolase</fullName>
        <shortName>ASPPase</shortName>
    </alternativeName>
    <alternativeName>
        <fullName>Adenosine diphosphoribose pyrophosphatase</fullName>
        <shortName>ADPR-PPase</shortName>
    </alternativeName>
</protein>
<accession>P83843</accession>
<accession>P36651</accession>
<reference key="1">
    <citation type="journal article" date="2001" name="Nature">
        <title>Genome sequence of enterohaemorrhagic Escherichia coli O157:H7.</title>
        <authorList>
            <person name="Perna N.T."/>
            <person name="Plunkett G. III"/>
            <person name="Burland V."/>
            <person name="Mau B."/>
            <person name="Glasner J.D."/>
            <person name="Rose D.J."/>
            <person name="Mayhew G.F."/>
            <person name="Evans P.S."/>
            <person name="Gregor J."/>
            <person name="Kirkpatrick H.A."/>
            <person name="Posfai G."/>
            <person name="Hackett J."/>
            <person name="Klink S."/>
            <person name="Boutin A."/>
            <person name="Shao Y."/>
            <person name="Miller L."/>
            <person name="Grotbeck E.J."/>
            <person name="Davis N.W."/>
            <person name="Lim A."/>
            <person name="Dimalanta E.T."/>
            <person name="Potamousis K."/>
            <person name="Apodaca J."/>
            <person name="Anantharaman T.S."/>
            <person name="Lin J."/>
            <person name="Yen G."/>
            <person name="Schwartz D.C."/>
            <person name="Welch R.A."/>
            <person name="Blattner F.R."/>
        </authorList>
    </citation>
    <scope>NUCLEOTIDE SEQUENCE [LARGE SCALE GENOMIC DNA]</scope>
    <source>
        <strain>O157:H7 / EDL933 / ATCC 700927 / EHEC</strain>
    </source>
</reference>
<reference key="2">
    <citation type="journal article" date="2001" name="DNA Res.">
        <title>Complete genome sequence of enterohemorrhagic Escherichia coli O157:H7 and genomic comparison with a laboratory strain K-12.</title>
        <authorList>
            <person name="Hayashi T."/>
            <person name="Makino K."/>
            <person name="Ohnishi M."/>
            <person name="Kurokawa K."/>
            <person name="Ishii K."/>
            <person name="Yokoyama K."/>
            <person name="Han C.-G."/>
            <person name="Ohtsubo E."/>
            <person name="Nakayama K."/>
            <person name="Murata T."/>
            <person name="Tanaka M."/>
            <person name="Tobe T."/>
            <person name="Iida T."/>
            <person name="Takami H."/>
            <person name="Honda T."/>
            <person name="Sasakawa C."/>
            <person name="Ogasawara N."/>
            <person name="Yasunaga T."/>
            <person name="Kuhara S."/>
            <person name="Shiba T."/>
            <person name="Hattori M."/>
            <person name="Shinagawa H."/>
        </authorList>
    </citation>
    <scope>NUCLEOTIDE SEQUENCE [LARGE SCALE GENOMIC DNA]</scope>
    <source>
        <strain>O157:H7 / Sakai / RIMD 0509952 / EHEC</strain>
    </source>
</reference>
<sequence>MLKPDNLPVTFGKNDVEIIARETLYRGFFSLDLYRFRHRLFNGQMSHEVRREIFERGHAAVLLPFDPVRDEVVLIEQIRIAAYDTSETPWLLEMVAGMIEEGESVEDVARREAIEEAGLIVKRTKPVLSFLASPGGTSERSSIMVGEVDATTASGIHGLADENEDIRVHVVSREQAYQWVEEGKIDNAASVIALQWLQLHHQALKNEWA</sequence>
<organism>
    <name type="scientific">Escherichia coli O157:H7</name>
    <dbReference type="NCBI Taxonomy" id="83334"/>
    <lineage>
        <taxon>Bacteria</taxon>
        <taxon>Pseudomonadati</taxon>
        <taxon>Pseudomonadota</taxon>
        <taxon>Gammaproteobacteria</taxon>
        <taxon>Enterobacterales</taxon>
        <taxon>Enterobacteriaceae</taxon>
        <taxon>Escherichia</taxon>
    </lineage>
</organism>
<feature type="chain" id="PRO_0000057044" description="ADP-ribose pyrophosphatase">
    <location>
        <begin position="1"/>
        <end position="209"/>
    </location>
</feature>
<feature type="domain" description="Nudix hydrolase" evidence="2">
    <location>
        <begin position="55"/>
        <end position="193"/>
    </location>
</feature>
<feature type="short sequence motif" description="Nudix box">
    <location>
        <begin position="97"/>
        <end position="118"/>
    </location>
</feature>
<feature type="active site" description="Proton acceptor" evidence="1">
    <location>
        <position position="162"/>
    </location>
</feature>
<feature type="binding site" description="in other chain" evidence="1">
    <location>
        <begin position="28"/>
        <end position="29"/>
    </location>
    <ligand>
        <name>substrate</name>
        <note>ligand shared between dimeric partners</note>
    </ligand>
</feature>
<feature type="binding site" evidence="1">
    <location>
        <begin position="51"/>
        <end position="52"/>
    </location>
    <ligand>
        <name>substrate</name>
        <note>ligand shared between dimeric partners</note>
    </ligand>
</feature>
<feature type="binding site" description="in other chain" evidence="1">
    <location>
        <position position="56"/>
    </location>
    <ligand>
        <name>substrate</name>
        <note>ligand shared between dimeric partners</note>
    </ligand>
</feature>
<feature type="binding site" description="in other chain" evidence="1">
    <location>
        <position position="79"/>
    </location>
    <ligand>
        <name>substrate</name>
        <note>ligand shared between dimeric partners</note>
    </ligand>
</feature>
<feature type="binding site" evidence="1">
    <location>
        <position position="96"/>
    </location>
    <ligand>
        <name>Mg(2+)</name>
        <dbReference type="ChEBI" id="CHEBI:18420"/>
        <label>1</label>
    </ligand>
</feature>
<feature type="binding site" description="in other chain" evidence="1">
    <location>
        <position position="98"/>
    </location>
    <ligand>
        <name>substrate</name>
        <note>ligand shared between dimeric partners</note>
    </ligand>
</feature>
<feature type="binding site" evidence="1">
    <location>
        <position position="112"/>
    </location>
    <ligand>
        <name>Mg(2+)</name>
        <dbReference type="ChEBI" id="CHEBI:18420"/>
        <label>2</label>
    </ligand>
</feature>
<feature type="binding site" evidence="1">
    <location>
        <position position="112"/>
    </location>
    <ligand>
        <name>Mg(2+)</name>
        <dbReference type="ChEBI" id="CHEBI:18420"/>
        <label>3</label>
    </ligand>
</feature>
<feature type="binding site" evidence="1">
    <location>
        <position position="116"/>
    </location>
    <ligand>
        <name>Mg(2+)</name>
        <dbReference type="ChEBI" id="CHEBI:18420"/>
        <label>1</label>
    </ligand>
</feature>
<feature type="binding site" evidence="1">
    <location>
        <position position="116"/>
    </location>
    <ligand>
        <name>Mg(2+)</name>
        <dbReference type="ChEBI" id="CHEBI:18420"/>
        <label>3</label>
    </ligand>
</feature>
<feature type="binding site" evidence="1">
    <location>
        <begin position="133"/>
        <end position="135"/>
    </location>
    <ligand>
        <name>substrate</name>
        <note>ligand shared between dimeric partners</note>
    </ligand>
</feature>
<feature type="binding site" description="in other chain" evidence="1">
    <location>
        <position position="139"/>
    </location>
    <ligand>
        <name>substrate</name>
        <note>ligand shared between dimeric partners</note>
    </ligand>
</feature>
<feature type="binding site" evidence="1">
    <location>
        <position position="164"/>
    </location>
    <ligand>
        <name>Mg(2+)</name>
        <dbReference type="ChEBI" id="CHEBI:18420"/>
        <label>3</label>
    </ligand>
</feature>
<name>ADPP_ECO57</name>
<dbReference type="EC" id="3.6.1.13"/>
<dbReference type="EMBL" id="AE005174">
    <property type="protein sequence ID" value="AAG58173.1"/>
    <property type="molecule type" value="Genomic_DNA"/>
</dbReference>
<dbReference type="EMBL" id="BA000007">
    <property type="protein sequence ID" value="BAB37345.1"/>
    <property type="molecule type" value="Genomic_DNA"/>
</dbReference>
<dbReference type="PIR" id="A85964">
    <property type="entry name" value="A85964"/>
</dbReference>
<dbReference type="PIR" id="B91119">
    <property type="entry name" value="B91119"/>
</dbReference>
<dbReference type="RefSeq" id="NP_311949.1">
    <property type="nucleotide sequence ID" value="NC_002695.1"/>
</dbReference>
<dbReference type="RefSeq" id="WP_000917117.1">
    <property type="nucleotide sequence ID" value="NZ_VOAI01000009.1"/>
</dbReference>
<dbReference type="SMR" id="P83843"/>
<dbReference type="STRING" id="155864.Z4391"/>
<dbReference type="GeneID" id="916244"/>
<dbReference type="GeneID" id="93778959"/>
<dbReference type="KEGG" id="ece:Z4391"/>
<dbReference type="KEGG" id="ecs:ECs_3922"/>
<dbReference type="PATRIC" id="fig|386585.9.peg.4090"/>
<dbReference type="eggNOG" id="COG0494">
    <property type="taxonomic scope" value="Bacteria"/>
</dbReference>
<dbReference type="HOGENOM" id="CLU_062658_6_1_6"/>
<dbReference type="OMA" id="TIIALQW"/>
<dbReference type="Proteomes" id="UP000000558">
    <property type="component" value="Chromosome"/>
</dbReference>
<dbReference type="Proteomes" id="UP000002519">
    <property type="component" value="Chromosome"/>
</dbReference>
<dbReference type="GO" id="GO:0005829">
    <property type="term" value="C:cytosol"/>
    <property type="evidence" value="ECO:0007669"/>
    <property type="project" value="TreeGrafter"/>
</dbReference>
<dbReference type="GO" id="GO:0047631">
    <property type="term" value="F:ADP-ribose diphosphatase activity"/>
    <property type="evidence" value="ECO:0007669"/>
    <property type="project" value="UniProtKB-EC"/>
</dbReference>
<dbReference type="GO" id="GO:0019144">
    <property type="term" value="F:ADP-sugar diphosphatase activity"/>
    <property type="evidence" value="ECO:0007669"/>
    <property type="project" value="TreeGrafter"/>
</dbReference>
<dbReference type="GO" id="GO:0046872">
    <property type="term" value="F:metal ion binding"/>
    <property type="evidence" value="ECO:0007669"/>
    <property type="project" value="UniProtKB-KW"/>
</dbReference>
<dbReference type="GO" id="GO:0006753">
    <property type="term" value="P:nucleoside phosphate metabolic process"/>
    <property type="evidence" value="ECO:0007669"/>
    <property type="project" value="TreeGrafter"/>
</dbReference>
<dbReference type="GO" id="GO:0019693">
    <property type="term" value="P:ribose phosphate metabolic process"/>
    <property type="evidence" value="ECO:0007669"/>
    <property type="project" value="TreeGrafter"/>
</dbReference>
<dbReference type="CDD" id="cd24155">
    <property type="entry name" value="NUDIX_ADPRase"/>
    <property type="match status" value="1"/>
</dbReference>
<dbReference type="FunFam" id="3.90.79.10:FF:000011">
    <property type="entry name" value="ADP-ribose pyrophosphatase"/>
    <property type="match status" value="1"/>
</dbReference>
<dbReference type="Gene3D" id="3.90.79.10">
    <property type="entry name" value="Nucleoside Triphosphate Pyrophosphohydrolase"/>
    <property type="match status" value="1"/>
</dbReference>
<dbReference type="InterPro" id="IPR004385">
    <property type="entry name" value="NDP_pyrophosphatase"/>
</dbReference>
<dbReference type="InterPro" id="IPR015797">
    <property type="entry name" value="NUDIX_hydrolase-like_dom_sf"/>
</dbReference>
<dbReference type="InterPro" id="IPR020084">
    <property type="entry name" value="NUDIX_hydrolase_CS"/>
</dbReference>
<dbReference type="InterPro" id="IPR000086">
    <property type="entry name" value="NUDIX_hydrolase_dom"/>
</dbReference>
<dbReference type="NCBIfam" id="TIGR00052">
    <property type="entry name" value="nudix-type nucleoside diphosphatase, YffH/AdpP family"/>
    <property type="match status" value="1"/>
</dbReference>
<dbReference type="NCBIfam" id="NF008003">
    <property type="entry name" value="PRK10729.1"/>
    <property type="match status" value="1"/>
</dbReference>
<dbReference type="PANTHER" id="PTHR11839:SF5">
    <property type="entry name" value="ADP-RIBOSE PYROPHOSPHATASE"/>
    <property type="match status" value="1"/>
</dbReference>
<dbReference type="PANTHER" id="PTHR11839">
    <property type="entry name" value="UDP/ADP-SUGAR PYROPHOSPHATASE"/>
    <property type="match status" value="1"/>
</dbReference>
<dbReference type="Pfam" id="PF00293">
    <property type="entry name" value="NUDIX"/>
    <property type="match status" value="1"/>
</dbReference>
<dbReference type="SUPFAM" id="SSF55811">
    <property type="entry name" value="Nudix"/>
    <property type="match status" value="1"/>
</dbReference>
<dbReference type="PROSITE" id="PS51462">
    <property type="entry name" value="NUDIX"/>
    <property type="match status" value="1"/>
</dbReference>
<dbReference type="PROSITE" id="PS00893">
    <property type="entry name" value="NUDIX_BOX"/>
    <property type="match status" value="1"/>
</dbReference>
<comment type="function">
    <text evidence="1">Acts on ADP-mannose and ADP-glucose as well as ADP-ribose. Prevents glycogen biosynthesis. The reaction catalyzed by this enzyme is a limiting step of the gluconeogenic process (By similarity).</text>
</comment>
<comment type="catalytic activity">
    <reaction>
        <text>ADP-D-ribose + H2O = D-ribose 5-phosphate + AMP + 2 H(+)</text>
        <dbReference type="Rhea" id="RHEA:10412"/>
        <dbReference type="ChEBI" id="CHEBI:15377"/>
        <dbReference type="ChEBI" id="CHEBI:15378"/>
        <dbReference type="ChEBI" id="CHEBI:57967"/>
        <dbReference type="ChEBI" id="CHEBI:78346"/>
        <dbReference type="ChEBI" id="CHEBI:456215"/>
        <dbReference type="EC" id="3.6.1.13"/>
    </reaction>
</comment>
<comment type="cofactor">
    <cofactor evidence="1">
        <name>Mg(2+)</name>
        <dbReference type="ChEBI" id="CHEBI:18420"/>
    </cofactor>
    <text evidence="1">Binds 3 Mg(2+) ions per subunit.</text>
</comment>
<comment type="activity regulation">
    <text evidence="1">Inhibited by phosphorylated compounds such as AMP, ADP, ATP, 3-phosphoglyceric acid and PPi. Not inhibited by orthophosphate. Activity is high in cells grown in low glucose concentrations and decreases dramatically as glucose concentration increases (By similarity).</text>
</comment>
<comment type="subunit">
    <text evidence="1">Homodimer.</text>
</comment>
<comment type="similarity">
    <text evidence="3">Belongs to the Nudix hydrolase family. NudF subfamily.</text>
</comment>
<evidence type="ECO:0000250" key="1"/>
<evidence type="ECO:0000255" key="2">
    <source>
        <dbReference type="PROSITE-ProRule" id="PRU00794"/>
    </source>
</evidence>
<evidence type="ECO:0000305" key="3"/>
<keyword id="KW-0378">Hydrolase</keyword>
<keyword id="KW-0460">Magnesium</keyword>
<keyword id="KW-0479">Metal-binding</keyword>
<keyword id="KW-1185">Reference proteome</keyword>
<gene>
    <name type="primary">nudF</name>
    <name type="synonym">aspP</name>
    <name type="ordered locus">Z4391</name>
    <name type="ordered locus">ECs3922</name>
</gene>
<proteinExistence type="inferred from homology"/>